<organism>
    <name type="scientific">Mycobacterium tuberculosis (strain CDC 1551 / Oshkosh)</name>
    <dbReference type="NCBI Taxonomy" id="83331"/>
    <lineage>
        <taxon>Bacteria</taxon>
        <taxon>Bacillati</taxon>
        <taxon>Actinomycetota</taxon>
        <taxon>Actinomycetes</taxon>
        <taxon>Mycobacteriales</taxon>
        <taxon>Mycobacteriaceae</taxon>
        <taxon>Mycobacterium</taxon>
        <taxon>Mycobacterium tuberculosis complex</taxon>
    </lineage>
</organism>
<gene>
    <name evidence="1" type="primary">dxs</name>
    <name type="ordered locus">MT2756</name>
</gene>
<evidence type="ECO:0000255" key="1">
    <source>
        <dbReference type="HAMAP-Rule" id="MF_00315"/>
    </source>
</evidence>
<feature type="chain" id="PRO_0000427077" description="1-deoxy-D-xylulose-5-phosphate synthase">
    <location>
        <begin position="1"/>
        <end position="638"/>
    </location>
</feature>
<feature type="binding site" evidence="1">
    <location>
        <position position="71"/>
    </location>
    <ligand>
        <name>thiamine diphosphate</name>
        <dbReference type="ChEBI" id="CHEBI:58937"/>
    </ligand>
</feature>
<feature type="binding site" evidence="1">
    <location>
        <begin position="112"/>
        <end position="114"/>
    </location>
    <ligand>
        <name>thiamine diphosphate</name>
        <dbReference type="ChEBI" id="CHEBI:58937"/>
    </ligand>
</feature>
<feature type="binding site" evidence="1">
    <location>
        <position position="144"/>
    </location>
    <ligand>
        <name>Mg(2+)</name>
        <dbReference type="ChEBI" id="CHEBI:18420"/>
    </ligand>
</feature>
<feature type="binding site" evidence="1">
    <location>
        <begin position="145"/>
        <end position="146"/>
    </location>
    <ligand>
        <name>thiamine diphosphate</name>
        <dbReference type="ChEBI" id="CHEBI:58937"/>
    </ligand>
</feature>
<feature type="binding site" evidence="1">
    <location>
        <position position="173"/>
    </location>
    <ligand>
        <name>Mg(2+)</name>
        <dbReference type="ChEBI" id="CHEBI:18420"/>
    </ligand>
</feature>
<feature type="binding site" evidence="1">
    <location>
        <position position="173"/>
    </location>
    <ligand>
        <name>thiamine diphosphate</name>
        <dbReference type="ChEBI" id="CHEBI:58937"/>
    </ligand>
</feature>
<feature type="binding site" evidence="1">
    <location>
        <position position="284"/>
    </location>
    <ligand>
        <name>thiamine diphosphate</name>
        <dbReference type="ChEBI" id="CHEBI:58937"/>
    </ligand>
</feature>
<feature type="binding site" evidence="1">
    <location>
        <position position="365"/>
    </location>
    <ligand>
        <name>thiamine diphosphate</name>
        <dbReference type="ChEBI" id="CHEBI:58937"/>
    </ligand>
</feature>
<sequence>MLQQIRGPADLQHLSQAQLRELAAEIREFLIHKVAATGGHLGPNLGVVELTLALHRVFDSPHDPIIFDTGHQAYVHKMLTGRSQDFATLRKKGGLSGYPSRAESEHDWVESSHASAALSYADGLAKAFELTGHRNRHVVAVVGDGALTGGMCWEALNNIAASRRPVIIVVNDNGRSYAPTIGGVADHLATLRLQPAYEQALETGRDLVRAVPLVGGLWFRFLHSVKAGIKDSLSPQLLFTDLGLKYVGPVDGHDERAVEVALRSARRFGAPVIVHVVTRKGMGYPPAEADQAEQMHSTVPIDPATGQATKVAGPGWTATFSDALIGYAQKRRDIVAITAAMPGPTGLTAFGQRFPDRLFDVGIAEQHAMTSAAGLAMGGLHPVVAIYSTFLNRAFDQIMMDVALHKLPVTMVLDRAGITGSDGASHNGMWDLSMLGIVPGIRVAAPRDATRLREELGEALDVDDGPTALRFPKGDVGEDISALERRGGVDVLAAPADGLNHDVLLVAIGAFAPMALAVAKRLHNQGIGVTVIDPRWVLPVSDGVRELAVQHKLLVTLEDNGVNGGAGSAVSAALRRAEIDVPCRDVGLPQEFYEHASRSEVLADLGLTDQDVARRITGWVAALGTGVCASDAIPEHLD</sequence>
<proteinExistence type="inferred from homology"/>
<name>DXS_MYCTO</name>
<comment type="function">
    <text evidence="1">Catalyzes the acyloin condensation reaction between C atoms 2 and 3 of pyruvate and glyceraldehyde 3-phosphate to yield 1-deoxy-D-xylulose-5-phosphate (DXP).</text>
</comment>
<comment type="catalytic activity">
    <reaction evidence="1">
        <text>D-glyceraldehyde 3-phosphate + pyruvate + H(+) = 1-deoxy-D-xylulose 5-phosphate + CO2</text>
        <dbReference type="Rhea" id="RHEA:12605"/>
        <dbReference type="ChEBI" id="CHEBI:15361"/>
        <dbReference type="ChEBI" id="CHEBI:15378"/>
        <dbReference type="ChEBI" id="CHEBI:16526"/>
        <dbReference type="ChEBI" id="CHEBI:57792"/>
        <dbReference type="ChEBI" id="CHEBI:59776"/>
        <dbReference type="EC" id="2.2.1.7"/>
    </reaction>
</comment>
<comment type="cofactor">
    <cofactor evidence="1">
        <name>Mg(2+)</name>
        <dbReference type="ChEBI" id="CHEBI:18420"/>
    </cofactor>
    <text evidence="1">Binds 1 Mg(2+) ion per subunit.</text>
</comment>
<comment type="cofactor">
    <cofactor evidence="1">
        <name>thiamine diphosphate</name>
        <dbReference type="ChEBI" id="CHEBI:58937"/>
    </cofactor>
    <text evidence="1">Binds 1 thiamine pyrophosphate per subunit.</text>
</comment>
<comment type="pathway">
    <text evidence="1">Metabolic intermediate biosynthesis; 1-deoxy-D-xylulose 5-phosphate biosynthesis; 1-deoxy-D-xylulose 5-phosphate from D-glyceraldehyde 3-phosphate and pyruvate: step 1/1.</text>
</comment>
<comment type="subunit">
    <text evidence="1">Homodimer.</text>
</comment>
<comment type="similarity">
    <text evidence="1">Belongs to the transketolase family. DXPS subfamily.</text>
</comment>
<dbReference type="EC" id="2.2.1.7" evidence="1"/>
<dbReference type="EMBL" id="AE000516">
    <property type="protein sequence ID" value="AAK47071.1"/>
    <property type="molecule type" value="Genomic_DNA"/>
</dbReference>
<dbReference type="PIR" id="E70528">
    <property type="entry name" value="E70528"/>
</dbReference>
<dbReference type="RefSeq" id="WP_003413891.1">
    <property type="nucleotide sequence ID" value="NZ_KK341227.1"/>
</dbReference>
<dbReference type="SMR" id="P9WNS2"/>
<dbReference type="KEGG" id="mtc:MT2756"/>
<dbReference type="PATRIC" id="fig|83331.31.peg.2967"/>
<dbReference type="HOGENOM" id="CLU_009227_1_4_11"/>
<dbReference type="UniPathway" id="UPA00064">
    <property type="reaction ID" value="UER00091"/>
</dbReference>
<dbReference type="Proteomes" id="UP000001020">
    <property type="component" value="Chromosome"/>
</dbReference>
<dbReference type="GO" id="GO:0005829">
    <property type="term" value="C:cytosol"/>
    <property type="evidence" value="ECO:0007669"/>
    <property type="project" value="TreeGrafter"/>
</dbReference>
<dbReference type="GO" id="GO:0008661">
    <property type="term" value="F:1-deoxy-D-xylulose-5-phosphate synthase activity"/>
    <property type="evidence" value="ECO:0007669"/>
    <property type="project" value="UniProtKB-UniRule"/>
</dbReference>
<dbReference type="GO" id="GO:0000287">
    <property type="term" value="F:magnesium ion binding"/>
    <property type="evidence" value="ECO:0007669"/>
    <property type="project" value="UniProtKB-UniRule"/>
</dbReference>
<dbReference type="GO" id="GO:0030976">
    <property type="term" value="F:thiamine pyrophosphate binding"/>
    <property type="evidence" value="ECO:0007669"/>
    <property type="project" value="UniProtKB-UniRule"/>
</dbReference>
<dbReference type="GO" id="GO:0052865">
    <property type="term" value="P:1-deoxy-D-xylulose 5-phosphate biosynthetic process"/>
    <property type="evidence" value="ECO:0007669"/>
    <property type="project" value="UniProtKB-UniPathway"/>
</dbReference>
<dbReference type="GO" id="GO:0019288">
    <property type="term" value="P:isopentenyl diphosphate biosynthetic process, methylerythritol 4-phosphate pathway"/>
    <property type="evidence" value="ECO:0007669"/>
    <property type="project" value="TreeGrafter"/>
</dbReference>
<dbReference type="GO" id="GO:0016114">
    <property type="term" value="P:terpenoid biosynthetic process"/>
    <property type="evidence" value="ECO:0007669"/>
    <property type="project" value="UniProtKB-UniRule"/>
</dbReference>
<dbReference type="GO" id="GO:0009228">
    <property type="term" value="P:thiamine biosynthetic process"/>
    <property type="evidence" value="ECO:0007669"/>
    <property type="project" value="UniProtKB-UniRule"/>
</dbReference>
<dbReference type="CDD" id="cd02007">
    <property type="entry name" value="TPP_DXS"/>
    <property type="match status" value="1"/>
</dbReference>
<dbReference type="CDD" id="cd07033">
    <property type="entry name" value="TPP_PYR_DXS_TK_like"/>
    <property type="match status" value="1"/>
</dbReference>
<dbReference type="FunFam" id="3.40.50.920:FF:000002">
    <property type="entry name" value="1-deoxy-D-xylulose-5-phosphate synthase"/>
    <property type="match status" value="1"/>
</dbReference>
<dbReference type="FunFam" id="3.40.50.970:FF:000005">
    <property type="entry name" value="1-deoxy-D-xylulose-5-phosphate synthase"/>
    <property type="match status" value="1"/>
</dbReference>
<dbReference type="Gene3D" id="3.40.50.920">
    <property type="match status" value="1"/>
</dbReference>
<dbReference type="Gene3D" id="3.40.50.970">
    <property type="match status" value="2"/>
</dbReference>
<dbReference type="HAMAP" id="MF_00315">
    <property type="entry name" value="DXP_synth"/>
    <property type="match status" value="1"/>
</dbReference>
<dbReference type="InterPro" id="IPR005477">
    <property type="entry name" value="Dxylulose-5-P_synthase"/>
</dbReference>
<dbReference type="InterPro" id="IPR029061">
    <property type="entry name" value="THDP-binding"/>
</dbReference>
<dbReference type="InterPro" id="IPR009014">
    <property type="entry name" value="Transketo_C/PFOR_II"/>
</dbReference>
<dbReference type="InterPro" id="IPR005475">
    <property type="entry name" value="Transketolase-like_Pyr-bd"/>
</dbReference>
<dbReference type="InterPro" id="IPR020826">
    <property type="entry name" value="Transketolase_BS"/>
</dbReference>
<dbReference type="InterPro" id="IPR033248">
    <property type="entry name" value="Transketolase_C"/>
</dbReference>
<dbReference type="InterPro" id="IPR049557">
    <property type="entry name" value="Transketolase_CS"/>
</dbReference>
<dbReference type="NCBIfam" id="TIGR00204">
    <property type="entry name" value="dxs"/>
    <property type="match status" value="1"/>
</dbReference>
<dbReference type="NCBIfam" id="NF003933">
    <property type="entry name" value="PRK05444.2-2"/>
    <property type="match status" value="1"/>
</dbReference>
<dbReference type="PANTHER" id="PTHR43322">
    <property type="entry name" value="1-D-DEOXYXYLULOSE 5-PHOSPHATE SYNTHASE-RELATED"/>
    <property type="match status" value="1"/>
</dbReference>
<dbReference type="PANTHER" id="PTHR43322:SF5">
    <property type="entry name" value="1-DEOXY-D-XYLULOSE-5-PHOSPHATE SYNTHASE, CHLOROPLASTIC"/>
    <property type="match status" value="1"/>
</dbReference>
<dbReference type="Pfam" id="PF13292">
    <property type="entry name" value="DXP_synthase_N"/>
    <property type="match status" value="1"/>
</dbReference>
<dbReference type="Pfam" id="PF02779">
    <property type="entry name" value="Transket_pyr"/>
    <property type="match status" value="1"/>
</dbReference>
<dbReference type="Pfam" id="PF02780">
    <property type="entry name" value="Transketolase_C"/>
    <property type="match status" value="1"/>
</dbReference>
<dbReference type="SMART" id="SM00861">
    <property type="entry name" value="Transket_pyr"/>
    <property type="match status" value="1"/>
</dbReference>
<dbReference type="SUPFAM" id="SSF52518">
    <property type="entry name" value="Thiamin diphosphate-binding fold (THDP-binding)"/>
    <property type="match status" value="2"/>
</dbReference>
<dbReference type="SUPFAM" id="SSF52922">
    <property type="entry name" value="TK C-terminal domain-like"/>
    <property type="match status" value="1"/>
</dbReference>
<dbReference type="PROSITE" id="PS00801">
    <property type="entry name" value="TRANSKETOLASE_1"/>
    <property type="match status" value="1"/>
</dbReference>
<dbReference type="PROSITE" id="PS00802">
    <property type="entry name" value="TRANSKETOLASE_2"/>
    <property type="match status" value="1"/>
</dbReference>
<keyword id="KW-0414">Isoprene biosynthesis</keyword>
<keyword id="KW-0460">Magnesium</keyword>
<keyword id="KW-0479">Metal-binding</keyword>
<keyword id="KW-1185">Reference proteome</keyword>
<keyword id="KW-0784">Thiamine biosynthesis</keyword>
<keyword id="KW-0786">Thiamine pyrophosphate</keyword>
<keyword id="KW-0808">Transferase</keyword>
<protein>
    <recommendedName>
        <fullName evidence="1">1-deoxy-D-xylulose-5-phosphate synthase</fullName>
        <ecNumber evidence="1">2.2.1.7</ecNumber>
    </recommendedName>
    <alternativeName>
        <fullName evidence="1">1-deoxyxylulose-5-phosphate synthase</fullName>
        <shortName evidence="1">DXP synthase</shortName>
        <shortName evidence="1">DXPS</shortName>
    </alternativeName>
</protein>
<accession>P9WNS2</accession>
<accession>L0TAC0</accession>
<accession>O07184</accession>
<accession>P0A554</accession>
<reference key="1">
    <citation type="journal article" date="2002" name="J. Bacteriol.">
        <title>Whole-genome comparison of Mycobacterium tuberculosis clinical and laboratory strains.</title>
        <authorList>
            <person name="Fleischmann R.D."/>
            <person name="Alland D."/>
            <person name="Eisen J.A."/>
            <person name="Carpenter L."/>
            <person name="White O."/>
            <person name="Peterson J.D."/>
            <person name="DeBoy R.T."/>
            <person name="Dodson R.J."/>
            <person name="Gwinn M.L."/>
            <person name="Haft D.H."/>
            <person name="Hickey E.K."/>
            <person name="Kolonay J.F."/>
            <person name="Nelson W.C."/>
            <person name="Umayam L.A."/>
            <person name="Ermolaeva M.D."/>
            <person name="Salzberg S.L."/>
            <person name="Delcher A."/>
            <person name="Utterback T.R."/>
            <person name="Weidman J.F."/>
            <person name="Khouri H.M."/>
            <person name="Gill J."/>
            <person name="Mikula A."/>
            <person name="Bishai W."/>
            <person name="Jacobs W.R. Jr."/>
            <person name="Venter J.C."/>
            <person name="Fraser C.M."/>
        </authorList>
    </citation>
    <scope>NUCLEOTIDE SEQUENCE [LARGE SCALE GENOMIC DNA]</scope>
    <source>
        <strain>CDC 1551 / Oshkosh</strain>
    </source>
</reference>